<gene>
    <name type="ordered locus">SAUSA300_1321</name>
</gene>
<reference key="1">
    <citation type="journal article" date="2006" name="Lancet">
        <title>Complete genome sequence of USA300, an epidemic clone of community-acquired meticillin-resistant Staphylococcus aureus.</title>
        <authorList>
            <person name="Diep B.A."/>
            <person name="Gill S.R."/>
            <person name="Chang R.F."/>
            <person name="Phan T.H."/>
            <person name="Chen J.H."/>
            <person name="Davidson M.G."/>
            <person name="Lin F."/>
            <person name="Lin J."/>
            <person name="Carleton H.A."/>
            <person name="Mongodin E.F."/>
            <person name="Sensabaugh G.F."/>
            <person name="Perdreau-Remington F."/>
        </authorList>
    </citation>
    <scope>NUCLEOTIDE SEQUENCE [LARGE SCALE GENOMIC DNA]</scope>
    <source>
        <strain>USA300</strain>
    </source>
</reference>
<dbReference type="EMBL" id="CP000255">
    <property type="protein sequence ID" value="ABD21021.1"/>
    <property type="molecule type" value="Genomic_DNA"/>
</dbReference>
<dbReference type="SMR" id="Q2FH10"/>
<dbReference type="KEGG" id="saa:SAUSA300_1321"/>
<dbReference type="HOGENOM" id="CLU_132521_0_0_9"/>
<dbReference type="OMA" id="QDICMDI"/>
<dbReference type="Proteomes" id="UP000001939">
    <property type="component" value="Chromosome"/>
</dbReference>
<dbReference type="GO" id="GO:0045454">
    <property type="term" value="P:cell redox homeostasis"/>
    <property type="evidence" value="ECO:0000250"/>
    <property type="project" value="UniProtKB"/>
</dbReference>
<dbReference type="Gene3D" id="3.40.30.10">
    <property type="entry name" value="Glutaredoxin"/>
    <property type="match status" value="1"/>
</dbReference>
<dbReference type="InterPro" id="IPR009474">
    <property type="entry name" value="BrxB/BrxA"/>
</dbReference>
<dbReference type="NCBIfam" id="TIGR04191">
    <property type="entry name" value="YphP_YqiW"/>
    <property type="match status" value="1"/>
</dbReference>
<dbReference type="PANTHER" id="PTHR40052:SF2">
    <property type="entry name" value="BACILLIREDOXIN BRXA"/>
    <property type="match status" value="1"/>
</dbReference>
<dbReference type="PANTHER" id="PTHR40052">
    <property type="entry name" value="UPF0403 PROTEIN YQIW-RELATED"/>
    <property type="match status" value="1"/>
</dbReference>
<dbReference type="Pfam" id="PF06491">
    <property type="entry name" value="Disulph_isomer"/>
    <property type="match status" value="1"/>
</dbReference>
<evidence type="ECO:0000305" key="1"/>
<sequence>MNAYDAYMKEIAQQMRGELTQNGFTSLETSEAVSEYMNQVNADDTTFVVINSTCGCAAGLARPAAVAVATQNEHRPTNTVTVFAGQDKEATATMREFIQQAPSSPSYALFKGQDLVYFMPREFIEGRDINDIAMDLKDAFDENCK</sequence>
<organism>
    <name type="scientific">Staphylococcus aureus (strain USA300)</name>
    <dbReference type="NCBI Taxonomy" id="367830"/>
    <lineage>
        <taxon>Bacteria</taxon>
        <taxon>Bacillati</taxon>
        <taxon>Bacillota</taxon>
        <taxon>Bacilli</taxon>
        <taxon>Bacillales</taxon>
        <taxon>Staphylococcaceae</taxon>
        <taxon>Staphylococcus</taxon>
    </lineage>
</organism>
<name>Y1321_STAA3</name>
<proteinExistence type="inferred from homology"/>
<accession>Q2FH10</accession>
<feature type="chain" id="PRO_0000272011" description="Bacilliredoxin SAUSA300_1321">
    <location>
        <begin position="1"/>
        <end position="145"/>
    </location>
</feature>
<comment type="similarity">
    <text evidence="1">Belongs to the bacilliredoxin family.</text>
</comment>
<protein>
    <recommendedName>
        <fullName evidence="1">Bacilliredoxin SAUSA300_1321</fullName>
    </recommendedName>
</protein>